<accession>B5QUE3</accession>
<dbReference type="EMBL" id="AM933172">
    <property type="protein sequence ID" value="CAR33147.1"/>
    <property type="molecule type" value="Genomic_DNA"/>
</dbReference>
<dbReference type="RefSeq" id="WP_001183821.1">
    <property type="nucleotide sequence ID" value="NC_011294.1"/>
</dbReference>
<dbReference type="SMR" id="B5QUE3"/>
<dbReference type="KEGG" id="set:SEN1566"/>
<dbReference type="HOGENOM" id="CLU_133067_0_4_6"/>
<dbReference type="Proteomes" id="UP000000613">
    <property type="component" value="Chromosome"/>
</dbReference>
<dbReference type="GO" id="GO:0005886">
    <property type="term" value="C:plasma membrane"/>
    <property type="evidence" value="ECO:0007669"/>
    <property type="project" value="UniProtKB-SubCell"/>
</dbReference>
<dbReference type="GO" id="GO:0015199">
    <property type="term" value="F:amino-acid betaine transmembrane transporter activity"/>
    <property type="evidence" value="ECO:0007669"/>
    <property type="project" value="TreeGrafter"/>
</dbReference>
<dbReference type="GO" id="GO:0015297">
    <property type="term" value="F:antiporter activity"/>
    <property type="evidence" value="ECO:0007669"/>
    <property type="project" value="TreeGrafter"/>
</dbReference>
<dbReference type="GO" id="GO:0015220">
    <property type="term" value="F:choline transmembrane transporter activity"/>
    <property type="evidence" value="ECO:0007669"/>
    <property type="project" value="TreeGrafter"/>
</dbReference>
<dbReference type="GO" id="GO:0015606">
    <property type="term" value="F:spermidine transmembrane transporter activity"/>
    <property type="evidence" value="ECO:0007669"/>
    <property type="project" value="UniProtKB-UniRule"/>
</dbReference>
<dbReference type="GO" id="GO:0031460">
    <property type="term" value="P:glycine betaine transport"/>
    <property type="evidence" value="ECO:0007669"/>
    <property type="project" value="TreeGrafter"/>
</dbReference>
<dbReference type="FunFam" id="1.10.3730.20:FF:000001">
    <property type="entry name" value="Quaternary ammonium compound resistance transporter SugE"/>
    <property type="match status" value="1"/>
</dbReference>
<dbReference type="Gene3D" id="1.10.3730.20">
    <property type="match status" value="1"/>
</dbReference>
<dbReference type="HAMAP" id="MF_01597">
    <property type="entry name" value="MdtI"/>
    <property type="match status" value="1"/>
</dbReference>
<dbReference type="InterPro" id="IPR000390">
    <property type="entry name" value="Small_drug/metabolite_transptr"/>
</dbReference>
<dbReference type="InterPro" id="IPR045324">
    <property type="entry name" value="Small_multidrug_res"/>
</dbReference>
<dbReference type="InterPro" id="IPR023737">
    <property type="entry name" value="Spermidine_export_MdtI"/>
</dbReference>
<dbReference type="NCBIfam" id="NF007934">
    <property type="entry name" value="PRK10650.1"/>
    <property type="match status" value="1"/>
</dbReference>
<dbReference type="PANTHER" id="PTHR30561">
    <property type="entry name" value="SMR FAMILY PROTON-DEPENDENT DRUG EFFLUX TRANSPORTER SUGE"/>
    <property type="match status" value="1"/>
</dbReference>
<dbReference type="PANTHER" id="PTHR30561:SF6">
    <property type="entry name" value="SPERMIDINE EXPORT PROTEIN MDTI"/>
    <property type="match status" value="1"/>
</dbReference>
<dbReference type="Pfam" id="PF00893">
    <property type="entry name" value="Multi_Drug_Res"/>
    <property type="match status" value="1"/>
</dbReference>
<dbReference type="SUPFAM" id="SSF103481">
    <property type="entry name" value="Multidrug resistance efflux transporter EmrE"/>
    <property type="match status" value="1"/>
</dbReference>
<keyword id="KW-0997">Cell inner membrane</keyword>
<keyword id="KW-1003">Cell membrane</keyword>
<keyword id="KW-0472">Membrane</keyword>
<keyword id="KW-0812">Transmembrane</keyword>
<keyword id="KW-1133">Transmembrane helix</keyword>
<keyword id="KW-0813">Transport</keyword>
<gene>
    <name evidence="1" type="primary">mdtI</name>
    <name type="ordered locus">SEN1566</name>
</gene>
<name>MDTI_SALEP</name>
<proteinExistence type="inferred from homology"/>
<organism>
    <name type="scientific">Salmonella enteritidis PT4 (strain P125109)</name>
    <dbReference type="NCBI Taxonomy" id="550537"/>
    <lineage>
        <taxon>Bacteria</taxon>
        <taxon>Pseudomonadati</taxon>
        <taxon>Pseudomonadota</taxon>
        <taxon>Gammaproteobacteria</taxon>
        <taxon>Enterobacterales</taxon>
        <taxon>Enterobacteriaceae</taxon>
        <taxon>Salmonella</taxon>
    </lineage>
</organism>
<comment type="function">
    <text evidence="1">Catalyzes the excretion of spermidine.</text>
</comment>
<comment type="subunit">
    <text evidence="1">Forms a complex with MdtJ.</text>
</comment>
<comment type="subcellular location">
    <subcellularLocation>
        <location evidence="1">Cell inner membrane</location>
        <topology evidence="1">Multi-pass membrane protein</topology>
    </subcellularLocation>
</comment>
<comment type="similarity">
    <text evidence="1">Belongs to the drug/metabolite transporter (DMT) superfamily. Small multidrug resistance (SMR) (TC 2.A.7.1) family. MdtI subfamily.</text>
</comment>
<protein>
    <recommendedName>
        <fullName evidence="1">Spermidine export protein MdtI</fullName>
    </recommendedName>
</protein>
<reference key="1">
    <citation type="journal article" date="2008" name="Genome Res.">
        <title>Comparative genome analysis of Salmonella enteritidis PT4 and Salmonella gallinarum 287/91 provides insights into evolutionary and host adaptation pathways.</title>
        <authorList>
            <person name="Thomson N.R."/>
            <person name="Clayton D.J."/>
            <person name="Windhorst D."/>
            <person name="Vernikos G."/>
            <person name="Davidson S."/>
            <person name="Churcher C."/>
            <person name="Quail M.A."/>
            <person name="Stevens M."/>
            <person name="Jones M.A."/>
            <person name="Watson M."/>
            <person name="Barron A."/>
            <person name="Layton A."/>
            <person name="Pickard D."/>
            <person name="Kingsley R.A."/>
            <person name="Bignell A."/>
            <person name="Clark L."/>
            <person name="Harris B."/>
            <person name="Ormond D."/>
            <person name="Abdellah Z."/>
            <person name="Brooks K."/>
            <person name="Cherevach I."/>
            <person name="Chillingworth T."/>
            <person name="Woodward J."/>
            <person name="Norberczak H."/>
            <person name="Lord A."/>
            <person name="Arrowsmith C."/>
            <person name="Jagels K."/>
            <person name="Moule S."/>
            <person name="Mungall K."/>
            <person name="Saunders M."/>
            <person name="Whitehead S."/>
            <person name="Chabalgoity J.A."/>
            <person name="Maskell D."/>
            <person name="Humphreys T."/>
            <person name="Roberts M."/>
            <person name="Barrow P.A."/>
            <person name="Dougan G."/>
            <person name="Parkhill J."/>
        </authorList>
    </citation>
    <scope>NUCLEOTIDE SEQUENCE [LARGE SCALE GENOMIC DNA]</scope>
    <source>
        <strain>P125109</strain>
    </source>
</reference>
<evidence type="ECO:0000255" key="1">
    <source>
        <dbReference type="HAMAP-Rule" id="MF_01597"/>
    </source>
</evidence>
<sequence length="109" mass="11686">MQQFEWIHGAWLGLAIMLEIAANVLLKFSDGFRRKCYGILSLAAVLAAFSALSQAVKGIDLSVAYALWGGFGIAATLAAGWVLFGQRLNPKGWVGVILLLAGMVMIKFA</sequence>
<feature type="chain" id="PRO_1000197321" description="Spermidine export protein MdtI">
    <location>
        <begin position="1"/>
        <end position="109"/>
    </location>
</feature>
<feature type="transmembrane region" description="Helical" evidence="1">
    <location>
        <begin position="6"/>
        <end position="26"/>
    </location>
</feature>
<feature type="transmembrane region" description="Helical" evidence="1">
    <location>
        <begin position="36"/>
        <end position="56"/>
    </location>
</feature>
<feature type="transmembrane region" description="Helical" evidence="1">
    <location>
        <begin position="64"/>
        <end position="84"/>
    </location>
</feature>
<feature type="transmembrane region" description="Helical" evidence="1">
    <location>
        <begin position="88"/>
        <end position="108"/>
    </location>
</feature>